<feature type="chain" id="PRO_0000357778" description="NADH-quinone oxidoreductase subunit D">
    <location>
        <begin position="1"/>
        <end position="418"/>
    </location>
</feature>
<gene>
    <name evidence="1" type="primary">nuoD</name>
    <name type="ordered locus">BP0844</name>
</gene>
<evidence type="ECO:0000255" key="1">
    <source>
        <dbReference type="HAMAP-Rule" id="MF_01358"/>
    </source>
</evidence>
<protein>
    <recommendedName>
        <fullName evidence="1">NADH-quinone oxidoreductase subunit D</fullName>
        <ecNumber evidence="1">7.1.1.-</ecNumber>
    </recommendedName>
    <alternativeName>
        <fullName evidence="1">NADH dehydrogenase I subunit D</fullName>
    </alternativeName>
    <alternativeName>
        <fullName evidence="1">NDH-1 subunit D</fullName>
    </alternativeName>
</protein>
<keyword id="KW-0997">Cell inner membrane</keyword>
<keyword id="KW-1003">Cell membrane</keyword>
<keyword id="KW-0472">Membrane</keyword>
<keyword id="KW-0520">NAD</keyword>
<keyword id="KW-0874">Quinone</keyword>
<keyword id="KW-1185">Reference proteome</keyword>
<keyword id="KW-1278">Translocase</keyword>
<keyword id="KW-0813">Transport</keyword>
<keyword id="KW-0830">Ubiquinone</keyword>
<dbReference type="EC" id="7.1.1.-" evidence="1"/>
<dbReference type="EMBL" id="BX640413">
    <property type="protein sequence ID" value="CAE41147.1"/>
    <property type="molecule type" value="Genomic_DNA"/>
</dbReference>
<dbReference type="RefSeq" id="NP_879654.1">
    <property type="nucleotide sequence ID" value="NC_002929.2"/>
</dbReference>
<dbReference type="RefSeq" id="WP_010930035.1">
    <property type="nucleotide sequence ID" value="NZ_CP039022.1"/>
</dbReference>
<dbReference type="SMR" id="Q7VZQ2"/>
<dbReference type="STRING" id="257313.BP0844"/>
<dbReference type="PaxDb" id="257313-BP0844"/>
<dbReference type="KEGG" id="bpe:BP0844"/>
<dbReference type="PATRIC" id="fig|257313.5.peg.898"/>
<dbReference type="eggNOG" id="COG0649">
    <property type="taxonomic scope" value="Bacteria"/>
</dbReference>
<dbReference type="HOGENOM" id="CLU_015134_1_1_4"/>
<dbReference type="Proteomes" id="UP000002676">
    <property type="component" value="Chromosome"/>
</dbReference>
<dbReference type="GO" id="GO:0005886">
    <property type="term" value="C:plasma membrane"/>
    <property type="evidence" value="ECO:0007669"/>
    <property type="project" value="UniProtKB-SubCell"/>
</dbReference>
<dbReference type="GO" id="GO:0051287">
    <property type="term" value="F:NAD binding"/>
    <property type="evidence" value="ECO:0007669"/>
    <property type="project" value="InterPro"/>
</dbReference>
<dbReference type="GO" id="GO:0050136">
    <property type="term" value="F:NADH:ubiquinone reductase (non-electrogenic) activity"/>
    <property type="evidence" value="ECO:0007669"/>
    <property type="project" value="UniProtKB-UniRule"/>
</dbReference>
<dbReference type="GO" id="GO:0048038">
    <property type="term" value="F:quinone binding"/>
    <property type="evidence" value="ECO:0007669"/>
    <property type="project" value="UniProtKB-KW"/>
</dbReference>
<dbReference type="FunFam" id="1.10.645.10:FF:000005">
    <property type="entry name" value="NADH-quinone oxidoreductase subunit D"/>
    <property type="match status" value="1"/>
</dbReference>
<dbReference type="Gene3D" id="1.10.645.10">
    <property type="entry name" value="Cytochrome-c3 Hydrogenase, chain B"/>
    <property type="match status" value="1"/>
</dbReference>
<dbReference type="HAMAP" id="MF_01358">
    <property type="entry name" value="NDH1_NuoD"/>
    <property type="match status" value="1"/>
</dbReference>
<dbReference type="InterPro" id="IPR001135">
    <property type="entry name" value="NADH_Q_OxRdtase_suD"/>
</dbReference>
<dbReference type="InterPro" id="IPR014029">
    <property type="entry name" value="NADH_UbQ_OxRdtase_49kDa_CS"/>
</dbReference>
<dbReference type="InterPro" id="IPR022885">
    <property type="entry name" value="NDH1_su_D/H"/>
</dbReference>
<dbReference type="InterPro" id="IPR029014">
    <property type="entry name" value="NiFe-Hase_large"/>
</dbReference>
<dbReference type="NCBIfam" id="TIGR01962">
    <property type="entry name" value="NuoD"/>
    <property type="match status" value="1"/>
</dbReference>
<dbReference type="NCBIfam" id="NF004739">
    <property type="entry name" value="PRK06075.1"/>
    <property type="match status" value="1"/>
</dbReference>
<dbReference type="PANTHER" id="PTHR11993:SF10">
    <property type="entry name" value="NADH DEHYDROGENASE [UBIQUINONE] IRON-SULFUR PROTEIN 2, MITOCHONDRIAL"/>
    <property type="match status" value="1"/>
</dbReference>
<dbReference type="PANTHER" id="PTHR11993">
    <property type="entry name" value="NADH-UBIQUINONE OXIDOREDUCTASE 49 KDA SUBUNIT"/>
    <property type="match status" value="1"/>
</dbReference>
<dbReference type="Pfam" id="PF00346">
    <property type="entry name" value="Complex1_49kDa"/>
    <property type="match status" value="1"/>
</dbReference>
<dbReference type="SUPFAM" id="SSF56762">
    <property type="entry name" value="HydB/Nqo4-like"/>
    <property type="match status" value="1"/>
</dbReference>
<dbReference type="PROSITE" id="PS00535">
    <property type="entry name" value="COMPLEX1_49K"/>
    <property type="match status" value="1"/>
</dbReference>
<comment type="function">
    <text evidence="1">NDH-1 shuttles electrons from NADH, via FMN and iron-sulfur (Fe-S) centers, to quinones in the respiratory chain. The immediate electron acceptor for the enzyme in this species is believed to be ubiquinone. Couples the redox reaction to proton translocation (for every two electrons transferred, four hydrogen ions are translocated across the cytoplasmic membrane), and thus conserves the redox energy in a proton gradient.</text>
</comment>
<comment type="catalytic activity">
    <reaction evidence="1">
        <text>a quinone + NADH + 5 H(+)(in) = a quinol + NAD(+) + 4 H(+)(out)</text>
        <dbReference type="Rhea" id="RHEA:57888"/>
        <dbReference type="ChEBI" id="CHEBI:15378"/>
        <dbReference type="ChEBI" id="CHEBI:24646"/>
        <dbReference type="ChEBI" id="CHEBI:57540"/>
        <dbReference type="ChEBI" id="CHEBI:57945"/>
        <dbReference type="ChEBI" id="CHEBI:132124"/>
    </reaction>
</comment>
<comment type="subunit">
    <text evidence="1">NDH-1 is composed of 14 different subunits. Subunits NuoB, C, D, E, F, and G constitute the peripheral sector of the complex.</text>
</comment>
<comment type="subcellular location">
    <subcellularLocation>
        <location evidence="1">Cell inner membrane</location>
        <topology evidence="1">Peripheral membrane protein</topology>
        <orientation evidence="1">Cytoplasmic side</orientation>
    </subcellularLocation>
</comment>
<comment type="similarity">
    <text evidence="1">Belongs to the complex I 49 kDa subunit family.</text>
</comment>
<name>NUOD_BORPE</name>
<proteinExistence type="inferred from homology"/>
<accession>Q7VZQ2</accession>
<sequence length="418" mass="47458">MAEIKNYTLNFGPQHPAAHGVLRLVLELDGEVIQRADPHIGLLHRATEKLAEHKTFIQALPYMDRLDYVSMMCNEHAYVMAIEKLLGIEAPLRAQYIRVMFDEITRVLNHLMSLGSHALDVGAMAVFLYAFREREDLMDCYEAVSGARMHAAYYRPGGVYRDLPDTMPQYGDSSKYRGEKEVRAMNDARSGSLLDFIEDFTNRFPSCVDEYETLLTDNRIWKQRLVGIGVVDPDRAKALGFTGPMLRGSGVAWDLRKTQPYEVYDLMDFDVPVGVNGDCYDRYLVRVAEMRESNRIIRQCVEWLRNNPGPVMIENHKIAPPSRTAMKSNMEELIHHFKLFSEGFHVPPGEAYAAVEHPKGEFGIYLVADGANKPYRLKIRAPGFAHLQSLDEMARGHMIADAVTIIGTQDIVFGEIDR</sequence>
<organism>
    <name type="scientific">Bordetella pertussis (strain Tohama I / ATCC BAA-589 / NCTC 13251)</name>
    <dbReference type="NCBI Taxonomy" id="257313"/>
    <lineage>
        <taxon>Bacteria</taxon>
        <taxon>Pseudomonadati</taxon>
        <taxon>Pseudomonadota</taxon>
        <taxon>Betaproteobacteria</taxon>
        <taxon>Burkholderiales</taxon>
        <taxon>Alcaligenaceae</taxon>
        <taxon>Bordetella</taxon>
    </lineage>
</organism>
<reference key="1">
    <citation type="journal article" date="2003" name="Nat. Genet.">
        <title>Comparative analysis of the genome sequences of Bordetella pertussis, Bordetella parapertussis and Bordetella bronchiseptica.</title>
        <authorList>
            <person name="Parkhill J."/>
            <person name="Sebaihia M."/>
            <person name="Preston A."/>
            <person name="Murphy L.D."/>
            <person name="Thomson N.R."/>
            <person name="Harris D.E."/>
            <person name="Holden M.T.G."/>
            <person name="Churcher C.M."/>
            <person name="Bentley S.D."/>
            <person name="Mungall K.L."/>
            <person name="Cerdeno-Tarraga A.-M."/>
            <person name="Temple L."/>
            <person name="James K.D."/>
            <person name="Harris B."/>
            <person name="Quail M.A."/>
            <person name="Achtman M."/>
            <person name="Atkin R."/>
            <person name="Baker S."/>
            <person name="Basham D."/>
            <person name="Bason N."/>
            <person name="Cherevach I."/>
            <person name="Chillingworth T."/>
            <person name="Collins M."/>
            <person name="Cronin A."/>
            <person name="Davis P."/>
            <person name="Doggett J."/>
            <person name="Feltwell T."/>
            <person name="Goble A."/>
            <person name="Hamlin N."/>
            <person name="Hauser H."/>
            <person name="Holroyd S."/>
            <person name="Jagels K."/>
            <person name="Leather S."/>
            <person name="Moule S."/>
            <person name="Norberczak H."/>
            <person name="O'Neil S."/>
            <person name="Ormond D."/>
            <person name="Price C."/>
            <person name="Rabbinowitsch E."/>
            <person name="Rutter S."/>
            <person name="Sanders M."/>
            <person name="Saunders D."/>
            <person name="Seeger K."/>
            <person name="Sharp S."/>
            <person name="Simmonds M."/>
            <person name="Skelton J."/>
            <person name="Squares R."/>
            <person name="Squares S."/>
            <person name="Stevens K."/>
            <person name="Unwin L."/>
            <person name="Whitehead S."/>
            <person name="Barrell B.G."/>
            <person name="Maskell D.J."/>
        </authorList>
    </citation>
    <scope>NUCLEOTIDE SEQUENCE [LARGE SCALE GENOMIC DNA]</scope>
    <source>
        <strain>Tohama I / ATCC BAA-589 / NCTC 13251</strain>
    </source>
</reference>